<gene>
    <name type="ORF">IIV3-118R</name>
</gene>
<organism>
    <name type="scientific">Invertebrate iridescent virus 3</name>
    <name type="common">IIV-3</name>
    <name type="synonym">Mosquito iridescent virus</name>
    <dbReference type="NCBI Taxonomy" id="345201"/>
    <lineage>
        <taxon>Viruses</taxon>
        <taxon>Varidnaviria</taxon>
        <taxon>Bamfordvirae</taxon>
        <taxon>Nucleocytoviricota</taxon>
        <taxon>Megaviricetes</taxon>
        <taxon>Pimascovirales</taxon>
        <taxon>Iridoviridae</taxon>
        <taxon>Betairidovirinae</taxon>
        <taxon>Chloriridovirus</taxon>
    </lineage>
</organism>
<dbReference type="EMBL" id="DQ643392">
    <property type="protein sequence ID" value="ABF82148.1"/>
    <property type="molecule type" value="Genomic_DNA"/>
</dbReference>
<dbReference type="RefSeq" id="YP_654690.1">
    <property type="nucleotide sequence ID" value="NC_008187.1"/>
</dbReference>
<dbReference type="SMR" id="Q196U2"/>
<dbReference type="KEGG" id="vg:4156329"/>
<dbReference type="Proteomes" id="UP000001358">
    <property type="component" value="Genome"/>
</dbReference>
<keyword id="KW-1185">Reference proteome</keyword>
<name>118R_IIV3</name>
<proteinExistence type="predicted"/>
<sequence>MSNFRVESKIRLSDTDIAVLHQRIVQLESTVTRLAENDLQNTIDSKPLTEVIVRNSTNIEQLQKQMAQCSCGQF</sequence>
<accession>Q196U2</accession>
<feature type="chain" id="PRO_0000377817" description="Uncharacterized protein 118R">
    <location>
        <begin position="1"/>
        <end position="74"/>
    </location>
</feature>
<organismHost>
    <name type="scientific">Aedes vexans</name>
    <name type="common">Inland floodwater mosquito</name>
    <name type="synonym">Culex vexans</name>
    <dbReference type="NCBI Taxonomy" id="7163"/>
</organismHost>
<organismHost>
    <name type="scientific">Culex territans</name>
    <dbReference type="NCBI Taxonomy" id="42431"/>
</organismHost>
<organismHost>
    <name type="scientific">Culiseta annulata</name>
    <dbReference type="NCBI Taxonomy" id="332058"/>
</organismHost>
<organismHost>
    <name type="scientific">Ochlerotatus sollicitans</name>
    <name type="common">eastern saltmarsh mosquito</name>
    <dbReference type="NCBI Taxonomy" id="310513"/>
</organismHost>
<organismHost>
    <name type="scientific">Ochlerotatus taeniorhynchus</name>
    <name type="common">Black salt marsh mosquito</name>
    <name type="synonym">Aedes taeniorhynchus</name>
    <dbReference type="NCBI Taxonomy" id="329105"/>
</organismHost>
<organismHost>
    <name type="scientific">Psorophora ferox</name>
    <dbReference type="NCBI Taxonomy" id="7183"/>
</organismHost>
<reference key="1">
    <citation type="journal article" date="2006" name="J. Virol.">
        <title>Genome of invertebrate iridescent virus type 3 (mosquito iridescent virus).</title>
        <authorList>
            <person name="Delhon G."/>
            <person name="Tulman E.R."/>
            <person name="Afonso C.L."/>
            <person name="Lu Z."/>
            <person name="Becnel J.J."/>
            <person name="Moser B.A."/>
            <person name="Kutish G.F."/>
            <person name="Rock D.L."/>
        </authorList>
    </citation>
    <scope>NUCLEOTIDE SEQUENCE [LARGE SCALE GENOMIC DNA]</scope>
</reference>
<protein>
    <recommendedName>
        <fullName>Uncharacterized protein 118R</fullName>
    </recommendedName>
</protein>